<accession>A5CX75</accession>
<protein>
    <recommendedName>
        <fullName evidence="1">Ribosomal RNA large subunit methyltransferase E</fullName>
        <ecNumber evidence="1">2.1.1.166</ecNumber>
    </recommendedName>
    <alternativeName>
        <fullName evidence="1">23S rRNA Um2552 methyltransferase</fullName>
    </alternativeName>
    <alternativeName>
        <fullName evidence="1">rRNA (uridine-2'-O-)-methyltransferase</fullName>
    </alternativeName>
</protein>
<gene>
    <name evidence="1" type="primary">rlmE</name>
    <name evidence="1" type="synonym">ftsJ</name>
    <name evidence="1" type="synonym">rrmJ</name>
    <name type="ordered locus">COSY_0336</name>
</gene>
<dbReference type="EC" id="2.1.1.166" evidence="1"/>
<dbReference type="EMBL" id="AP009247">
    <property type="protein sequence ID" value="BAF61461.1"/>
    <property type="molecule type" value="Genomic_DNA"/>
</dbReference>
<dbReference type="RefSeq" id="WP_011929731.1">
    <property type="nucleotide sequence ID" value="NC_009465.1"/>
</dbReference>
<dbReference type="SMR" id="A5CX75"/>
<dbReference type="STRING" id="412965.COSY_0336"/>
<dbReference type="KEGG" id="vok:COSY_0336"/>
<dbReference type="eggNOG" id="COG0293">
    <property type="taxonomic scope" value="Bacteria"/>
</dbReference>
<dbReference type="HOGENOM" id="CLU_009422_4_0_6"/>
<dbReference type="OrthoDB" id="9790080at2"/>
<dbReference type="Proteomes" id="UP000000247">
    <property type="component" value="Chromosome"/>
</dbReference>
<dbReference type="GO" id="GO:0005737">
    <property type="term" value="C:cytoplasm"/>
    <property type="evidence" value="ECO:0007669"/>
    <property type="project" value="UniProtKB-SubCell"/>
</dbReference>
<dbReference type="GO" id="GO:0008650">
    <property type="term" value="F:rRNA (uridine-2'-O-)-methyltransferase activity"/>
    <property type="evidence" value="ECO:0007669"/>
    <property type="project" value="UniProtKB-UniRule"/>
</dbReference>
<dbReference type="FunFam" id="3.40.50.150:FF:000005">
    <property type="entry name" value="Ribosomal RNA large subunit methyltransferase E"/>
    <property type="match status" value="1"/>
</dbReference>
<dbReference type="Gene3D" id="3.40.50.150">
    <property type="entry name" value="Vaccinia Virus protein VP39"/>
    <property type="match status" value="1"/>
</dbReference>
<dbReference type="HAMAP" id="MF_01547">
    <property type="entry name" value="RNA_methyltr_E"/>
    <property type="match status" value="1"/>
</dbReference>
<dbReference type="InterPro" id="IPR050082">
    <property type="entry name" value="RNA_methyltr_RlmE"/>
</dbReference>
<dbReference type="InterPro" id="IPR002877">
    <property type="entry name" value="RNA_MeTrfase_FtsJ_dom"/>
</dbReference>
<dbReference type="InterPro" id="IPR015507">
    <property type="entry name" value="rRNA-MeTfrase_E"/>
</dbReference>
<dbReference type="InterPro" id="IPR029063">
    <property type="entry name" value="SAM-dependent_MTases_sf"/>
</dbReference>
<dbReference type="NCBIfam" id="NF008390">
    <property type="entry name" value="PRK11188.1"/>
    <property type="match status" value="1"/>
</dbReference>
<dbReference type="PANTHER" id="PTHR10920">
    <property type="entry name" value="RIBOSOMAL RNA METHYLTRANSFERASE"/>
    <property type="match status" value="1"/>
</dbReference>
<dbReference type="PANTHER" id="PTHR10920:SF18">
    <property type="entry name" value="RRNA METHYLTRANSFERASE 2, MITOCHONDRIAL"/>
    <property type="match status" value="1"/>
</dbReference>
<dbReference type="Pfam" id="PF01728">
    <property type="entry name" value="FtsJ"/>
    <property type="match status" value="1"/>
</dbReference>
<dbReference type="PIRSF" id="PIRSF005461">
    <property type="entry name" value="23S_rRNA_mtase"/>
    <property type="match status" value="1"/>
</dbReference>
<dbReference type="SUPFAM" id="SSF53335">
    <property type="entry name" value="S-adenosyl-L-methionine-dependent methyltransferases"/>
    <property type="match status" value="1"/>
</dbReference>
<organism>
    <name type="scientific">Vesicomyosocius okutanii subsp. Calyptogena okutanii (strain HA)</name>
    <dbReference type="NCBI Taxonomy" id="412965"/>
    <lineage>
        <taxon>Bacteria</taxon>
        <taxon>Pseudomonadati</taxon>
        <taxon>Pseudomonadota</taxon>
        <taxon>Gammaproteobacteria</taxon>
        <taxon>Candidatus Pseudothioglobaceae</taxon>
        <taxon>Candidatus Vesicomyosocius</taxon>
    </lineage>
</organism>
<feature type="chain" id="PRO_0000300600" description="Ribosomal RNA large subunit methyltransferase E">
    <location>
        <begin position="1"/>
        <end position="210"/>
    </location>
</feature>
<feature type="active site" description="Proton acceptor" evidence="1">
    <location>
        <position position="161"/>
    </location>
</feature>
<feature type="binding site" evidence="1">
    <location>
        <position position="60"/>
    </location>
    <ligand>
        <name>S-adenosyl-L-methionine</name>
        <dbReference type="ChEBI" id="CHEBI:59789"/>
    </ligand>
</feature>
<feature type="binding site" evidence="1">
    <location>
        <position position="62"/>
    </location>
    <ligand>
        <name>S-adenosyl-L-methionine</name>
        <dbReference type="ChEBI" id="CHEBI:59789"/>
    </ligand>
</feature>
<feature type="binding site" evidence="1">
    <location>
        <position position="80"/>
    </location>
    <ligand>
        <name>S-adenosyl-L-methionine</name>
        <dbReference type="ChEBI" id="CHEBI:59789"/>
    </ligand>
</feature>
<feature type="binding site" evidence="1">
    <location>
        <position position="96"/>
    </location>
    <ligand>
        <name>S-adenosyl-L-methionine</name>
        <dbReference type="ChEBI" id="CHEBI:59789"/>
    </ligand>
</feature>
<feature type="binding site" evidence="1">
    <location>
        <position position="121"/>
    </location>
    <ligand>
        <name>S-adenosyl-L-methionine</name>
        <dbReference type="ChEBI" id="CHEBI:59789"/>
    </ligand>
</feature>
<keyword id="KW-0963">Cytoplasm</keyword>
<keyword id="KW-0489">Methyltransferase</keyword>
<keyword id="KW-1185">Reference proteome</keyword>
<keyword id="KW-0698">rRNA processing</keyword>
<keyword id="KW-0949">S-adenosyl-L-methionine</keyword>
<keyword id="KW-0808">Transferase</keyword>
<proteinExistence type="inferred from homology"/>
<name>RLME_VESOH</name>
<reference key="1">
    <citation type="journal article" date="2007" name="Curr. Biol.">
        <title>Reduced genome of the thioautotrophic intracellular symbiont in a deep-sea clam, Calyptogena okutanii.</title>
        <authorList>
            <person name="Kuwahara H."/>
            <person name="Yoshida T."/>
            <person name="Takaki Y."/>
            <person name="Shimamura S."/>
            <person name="Nishi S."/>
            <person name="Harada M."/>
            <person name="Matsuyama K."/>
            <person name="Takishita K."/>
            <person name="Kawato M."/>
            <person name="Uematsu K."/>
            <person name="Fujiwara Y."/>
            <person name="Sato T."/>
            <person name="Kato C."/>
            <person name="Kitagawa M."/>
            <person name="Kato I."/>
            <person name="Maruyama T."/>
        </authorList>
    </citation>
    <scope>NUCLEOTIDE SEQUENCE [LARGE SCALE GENOMIC DNA]</scope>
    <source>
        <strain>HA</strain>
    </source>
</reference>
<evidence type="ECO:0000255" key="1">
    <source>
        <dbReference type="HAMAP-Rule" id="MF_01547"/>
    </source>
</evidence>
<sequence length="210" mass="23563">MSKKDSSRRWMREHINDKFVKNAKKAGYRSRAVYKLIEVINKEKFIKPGNKVIDLGAAPGSWSQMAIKAVGKSGQVIANDILNIKPIDGIDFLQGDFTENSVYEALLNLTMNQKVNVVLSDIAPNISGQPSVDIPKSMYLCELALDIAIKSLTPSGYFFVKVFQGDGFDMFVESCRTYFSYVTIHKPKASRTRSKEVYLLANKLKPAKLM</sequence>
<comment type="function">
    <text evidence="1">Specifically methylates the uridine in position 2552 of 23S rRNA at the 2'-O position of the ribose in the fully assembled 50S ribosomal subunit.</text>
</comment>
<comment type="catalytic activity">
    <reaction evidence="1">
        <text>uridine(2552) in 23S rRNA + S-adenosyl-L-methionine = 2'-O-methyluridine(2552) in 23S rRNA + S-adenosyl-L-homocysteine + H(+)</text>
        <dbReference type="Rhea" id="RHEA:42720"/>
        <dbReference type="Rhea" id="RHEA-COMP:10202"/>
        <dbReference type="Rhea" id="RHEA-COMP:10203"/>
        <dbReference type="ChEBI" id="CHEBI:15378"/>
        <dbReference type="ChEBI" id="CHEBI:57856"/>
        <dbReference type="ChEBI" id="CHEBI:59789"/>
        <dbReference type="ChEBI" id="CHEBI:65315"/>
        <dbReference type="ChEBI" id="CHEBI:74478"/>
        <dbReference type="EC" id="2.1.1.166"/>
    </reaction>
</comment>
<comment type="subcellular location">
    <subcellularLocation>
        <location evidence="1">Cytoplasm</location>
    </subcellularLocation>
</comment>
<comment type="similarity">
    <text evidence="1">Belongs to the class I-like SAM-binding methyltransferase superfamily. RNA methyltransferase RlmE family.</text>
</comment>